<accession>P40546</accession>
<accession>D6VVR0</accession>
<accession>Q6Q5G5</accession>
<organism>
    <name type="scientific">Saccharomyces cerevisiae (strain ATCC 204508 / S288c)</name>
    <name type="common">Baker's yeast</name>
    <dbReference type="NCBI Taxonomy" id="559292"/>
    <lineage>
        <taxon>Eukaryota</taxon>
        <taxon>Fungi</taxon>
        <taxon>Dikarya</taxon>
        <taxon>Ascomycota</taxon>
        <taxon>Saccharomycotina</taxon>
        <taxon>Saccharomycetes</taxon>
        <taxon>Saccharomycetales</taxon>
        <taxon>Saccharomycetaceae</taxon>
        <taxon>Saccharomyces</taxon>
    </lineage>
</organism>
<reference key="1">
    <citation type="journal article" date="1997" name="Nature">
        <title>The nucleotide sequence of Saccharomyces cerevisiae chromosome IX.</title>
        <authorList>
            <person name="Churcher C.M."/>
            <person name="Bowman S."/>
            <person name="Badcock K."/>
            <person name="Bankier A.T."/>
            <person name="Brown D."/>
            <person name="Chillingworth T."/>
            <person name="Connor R."/>
            <person name="Devlin K."/>
            <person name="Gentles S."/>
            <person name="Hamlin N."/>
            <person name="Harris D.E."/>
            <person name="Horsnell T."/>
            <person name="Hunt S."/>
            <person name="Jagels K."/>
            <person name="Jones M."/>
            <person name="Lye G."/>
            <person name="Moule S."/>
            <person name="Odell C."/>
            <person name="Pearson D."/>
            <person name="Rajandream M.A."/>
            <person name="Rice P."/>
            <person name="Rowley N."/>
            <person name="Skelton J."/>
            <person name="Smith V."/>
            <person name="Walsh S.V."/>
            <person name="Whitehead S."/>
            <person name="Barrell B.G."/>
        </authorList>
    </citation>
    <scope>NUCLEOTIDE SEQUENCE [LARGE SCALE GENOMIC DNA]</scope>
    <source>
        <strain>ATCC 204508 / S288c</strain>
    </source>
</reference>
<reference key="2">
    <citation type="journal article" date="2014" name="G3 (Bethesda)">
        <title>The reference genome sequence of Saccharomyces cerevisiae: Then and now.</title>
        <authorList>
            <person name="Engel S.R."/>
            <person name="Dietrich F.S."/>
            <person name="Fisk D.G."/>
            <person name="Binkley G."/>
            <person name="Balakrishnan R."/>
            <person name="Costanzo M.C."/>
            <person name="Dwight S.S."/>
            <person name="Hitz B.C."/>
            <person name="Karra K."/>
            <person name="Nash R.S."/>
            <person name="Weng S."/>
            <person name="Wong E.D."/>
            <person name="Lloyd P."/>
            <person name="Skrzypek M.S."/>
            <person name="Miyasato S.R."/>
            <person name="Simison M."/>
            <person name="Cherry J.M."/>
        </authorList>
    </citation>
    <scope>GENOME REANNOTATION</scope>
    <source>
        <strain>ATCC 204508 / S288c</strain>
    </source>
</reference>
<reference key="3">
    <citation type="journal article" date="2007" name="Genome Res.">
        <title>Approaching a complete repository of sequence-verified protein-encoding clones for Saccharomyces cerevisiae.</title>
        <authorList>
            <person name="Hu Y."/>
            <person name="Rolfs A."/>
            <person name="Bhullar B."/>
            <person name="Murthy T.V.S."/>
            <person name="Zhu C."/>
            <person name="Berger M.F."/>
            <person name="Camargo A.A."/>
            <person name="Kelley F."/>
            <person name="McCarron S."/>
            <person name="Jepson D."/>
            <person name="Richardson A."/>
            <person name="Raphael J."/>
            <person name="Moreira D."/>
            <person name="Taycher E."/>
            <person name="Zuo D."/>
            <person name="Mohr S."/>
            <person name="Kane M.F."/>
            <person name="Williamson J."/>
            <person name="Simpson A.J.G."/>
            <person name="Bulyk M.L."/>
            <person name="Harlow E."/>
            <person name="Marsischky G."/>
            <person name="Kolodner R.D."/>
            <person name="LaBaer J."/>
        </authorList>
    </citation>
    <scope>NUCLEOTIDE SEQUENCE [GENOMIC DNA]</scope>
    <source>
        <strain>ATCC 204508 / S288c</strain>
    </source>
</reference>
<reference key="4">
    <citation type="journal article" date="2004" name="Biochem. Biophys. Res. Commun.">
        <title>Functional and physical interactions of Faf1p, a Saccharomyces cerevisiae nucleolar protein.</title>
        <authorList>
            <person name="Karkusiewicz I."/>
            <person name="Rempola B."/>
            <person name="Gromadka R."/>
            <person name="Grynberg M."/>
            <person name="Rytka J."/>
        </authorList>
    </citation>
    <scope>FUNCTION</scope>
    <scope>SUBCELLULAR LOCATION</scope>
    <scope>INTERACTION WITH KRR1</scope>
</reference>
<reference key="5">
    <citation type="journal article" date="2012" name="Proc. Natl. Acad. Sci. U.S.A.">
        <title>N-terminal acetylome analyses and functional insights of the N-terminal acetyltransferase NatB.</title>
        <authorList>
            <person name="Van Damme P."/>
            <person name="Lasa M."/>
            <person name="Polevoda B."/>
            <person name="Gazquez C."/>
            <person name="Elosegui-Artola A."/>
            <person name="Kim D.S."/>
            <person name="De Juan-Pardo E."/>
            <person name="Demeyer K."/>
            <person name="Hole K."/>
            <person name="Larrea E."/>
            <person name="Timmerman E."/>
            <person name="Prieto J."/>
            <person name="Arnesen T."/>
            <person name="Sherman F."/>
            <person name="Gevaert K."/>
            <person name="Aldabe R."/>
        </authorList>
    </citation>
    <scope>IDENTIFICATION BY MASS SPECTROMETRY [LARGE SCALE ANALYSIS]</scope>
</reference>
<gene>
    <name type="primary">FAF1</name>
    <name type="ordered locus">YIL019W</name>
</gene>
<evidence type="ECO:0000256" key="1">
    <source>
        <dbReference type="SAM" id="MobiDB-lite"/>
    </source>
</evidence>
<evidence type="ECO:0000269" key="2">
    <source>
    </source>
</evidence>
<evidence type="ECO:0007829" key="3">
    <source>
        <dbReference type="PDB" id="4QMF"/>
    </source>
</evidence>
<protein>
    <recommendedName>
        <fullName>Protein FAF1</fullName>
    </recommendedName>
    <alternativeName>
        <fullName>Forty S assembly factor</fullName>
    </alternativeName>
</protein>
<name>FAF1_YEAST</name>
<sequence length="346" mass="38889">MTLDDDDYIKQMELQRKAFESQFGSLESMGFEDKTKNIRTEVDTRDSSGDEIDNSDHGSDFKDGTIESSNSSDEDSGNETAEENNQDSKPKTQPKVIRFNGPSDVYVPPSKKTQKLLRSGKTLTQINKKLESTEAKEEKEDETLEAENLQNDLELQQFLRESHLLSAFNNGGSGSTNSGVSLTLQSMGGGNDDGIVYQDDQVIGKARSRTLEMRLNRLSRVNGHQDKINKLEKVPMHIRRGMIDKHVKRIKKYEQEAAEGGIVLSKVKKGQFRKIESTYKKDIERRIGGSIKARDKEKATKRERGLKISSVGRSTRNGLIVSKRDIARISGGERSGKFNGKKKSRR</sequence>
<proteinExistence type="evidence at protein level"/>
<dbReference type="EMBL" id="Z46881">
    <property type="protein sequence ID" value="CAA86973.1"/>
    <property type="molecule type" value="Genomic_DNA"/>
</dbReference>
<dbReference type="EMBL" id="AY558089">
    <property type="protein sequence ID" value="AAS56415.1"/>
    <property type="molecule type" value="Genomic_DNA"/>
</dbReference>
<dbReference type="EMBL" id="BK006942">
    <property type="protein sequence ID" value="DAA08526.1"/>
    <property type="molecule type" value="Genomic_DNA"/>
</dbReference>
<dbReference type="PIR" id="S49963">
    <property type="entry name" value="S49963"/>
</dbReference>
<dbReference type="RefSeq" id="NP_012245.1">
    <property type="nucleotide sequence ID" value="NM_001179369.1"/>
</dbReference>
<dbReference type="PDB" id="4QMF">
    <property type="method" value="X-ray"/>
    <property type="resolution" value="2.80 A"/>
    <property type="chains" value="A/C=145-220"/>
</dbReference>
<dbReference type="PDB" id="5WLC">
    <property type="method" value="EM"/>
    <property type="resolution" value="3.80 A"/>
    <property type="chains" value="NE=1-346"/>
</dbReference>
<dbReference type="PDB" id="6KE6">
    <property type="method" value="EM"/>
    <property type="resolution" value="3.40 A"/>
    <property type="chains" value="RV=1-346"/>
</dbReference>
<dbReference type="PDB" id="6LQP">
    <property type="method" value="EM"/>
    <property type="resolution" value="3.20 A"/>
    <property type="chains" value="RV=1-346"/>
</dbReference>
<dbReference type="PDB" id="6LQQ">
    <property type="method" value="EM"/>
    <property type="resolution" value="4.10 A"/>
    <property type="chains" value="RV=1-346"/>
</dbReference>
<dbReference type="PDB" id="6LQU">
    <property type="method" value="EM"/>
    <property type="resolution" value="3.70 A"/>
    <property type="chains" value="RV=1-346"/>
</dbReference>
<dbReference type="PDB" id="6ZQA">
    <property type="method" value="EM"/>
    <property type="resolution" value="4.40 A"/>
    <property type="chains" value="JN=1-346"/>
</dbReference>
<dbReference type="PDB" id="6ZQB">
    <property type="method" value="EM"/>
    <property type="resolution" value="3.90 A"/>
    <property type="chains" value="JN=1-346"/>
</dbReference>
<dbReference type="PDB" id="6ZQC">
    <property type="method" value="EM"/>
    <property type="resolution" value="3.80 A"/>
    <property type="chains" value="JN=1-346"/>
</dbReference>
<dbReference type="PDB" id="7AJT">
    <property type="method" value="EM"/>
    <property type="resolution" value="4.60 A"/>
    <property type="chains" value="JN=1-346"/>
</dbReference>
<dbReference type="PDB" id="7SUK">
    <property type="method" value="EM"/>
    <property type="resolution" value="3.99 A"/>
    <property type="chains" value="NE=91-330"/>
</dbReference>
<dbReference type="PDBsum" id="4QMF"/>
<dbReference type="PDBsum" id="5WLC"/>
<dbReference type="PDBsum" id="6KE6"/>
<dbReference type="PDBsum" id="6LQP"/>
<dbReference type="PDBsum" id="6LQQ"/>
<dbReference type="PDBsum" id="6LQU"/>
<dbReference type="PDBsum" id="6ZQA"/>
<dbReference type="PDBsum" id="6ZQB"/>
<dbReference type="PDBsum" id="6ZQC"/>
<dbReference type="PDBsum" id="7AJT"/>
<dbReference type="PDBsum" id="7SUK"/>
<dbReference type="EMDB" id="EMD-0949"/>
<dbReference type="EMDB" id="EMD-0950"/>
<dbReference type="EMDB" id="EMD-0954"/>
<dbReference type="EMDB" id="EMD-11357"/>
<dbReference type="EMDB" id="EMD-11358"/>
<dbReference type="EMDB" id="EMD-11359"/>
<dbReference type="EMDB" id="EMD-11807"/>
<dbReference type="EMDB" id="EMD-25441"/>
<dbReference type="EMDB" id="EMD-8859"/>
<dbReference type="EMDB" id="EMD-9964"/>
<dbReference type="SMR" id="P40546"/>
<dbReference type="BioGRID" id="34969">
    <property type="interactions" value="129"/>
</dbReference>
<dbReference type="ComplexPortal" id="CPX-1604">
    <property type="entry name" value="Small ribosomal subunit processome"/>
</dbReference>
<dbReference type="DIP" id="DIP-4404N"/>
<dbReference type="FunCoup" id="P40546">
    <property type="interactions" value="281"/>
</dbReference>
<dbReference type="IntAct" id="P40546">
    <property type="interactions" value="78"/>
</dbReference>
<dbReference type="MINT" id="P40546"/>
<dbReference type="STRING" id="4932.YIL019W"/>
<dbReference type="iPTMnet" id="P40546"/>
<dbReference type="PaxDb" id="4932-YIL019W"/>
<dbReference type="PeptideAtlas" id="P40546"/>
<dbReference type="EnsemblFungi" id="YIL019W_mRNA">
    <property type="protein sequence ID" value="YIL019W"/>
    <property type="gene ID" value="YIL019W"/>
</dbReference>
<dbReference type="GeneID" id="854793"/>
<dbReference type="KEGG" id="sce:YIL019W"/>
<dbReference type="AGR" id="SGD:S000001281"/>
<dbReference type="SGD" id="S000001281">
    <property type="gene designation" value="FAF1"/>
</dbReference>
<dbReference type="VEuPathDB" id="FungiDB:YIL019W"/>
<dbReference type="eggNOG" id="ENOG502QVP1">
    <property type="taxonomic scope" value="Eukaryota"/>
</dbReference>
<dbReference type="HOGENOM" id="CLU_069402_0_0_1"/>
<dbReference type="InParanoid" id="P40546"/>
<dbReference type="OMA" id="FEAQFKP"/>
<dbReference type="OrthoDB" id="5556956at2759"/>
<dbReference type="BioCyc" id="YEAST:G3O-31295-MONOMER"/>
<dbReference type="BioGRID-ORCS" id="854793">
    <property type="hits" value="2 hits in 10 CRISPR screens"/>
</dbReference>
<dbReference type="PRO" id="PR:P40546"/>
<dbReference type="Proteomes" id="UP000002311">
    <property type="component" value="Chromosome IX"/>
</dbReference>
<dbReference type="RNAct" id="P40546">
    <property type="molecule type" value="protein"/>
</dbReference>
<dbReference type="GO" id="GO:0005737">
    <property type="term" value="C:cytoplasm"/>
    <property type="evidence" value="ECO:0007005"/>
    <property type="project" value="SGD"/>
</dbReference>
<dbReference type="GO" id="GO:0005730">
    <property type="term" value="C:nucleolus"/>
    <property type="evidence" value="ECO:0000314"/>
    <property type="project" value="SGD"/>
</dbReference>
<dbReference type="GO" id="GO:0005634">
    <property type="term" value="C:nucleus"/>
    <property type="evidence" value="ECO:0007005"/>
    <property type="project" value="SGD"/>
</dbReference>
<dbReference type="GO" id="GO:0000462">
    <property type="term" value="P:maturation of SSU-rRNA from tricistronic rRNA transcript (SSU-rRNA, 5.8S rRNA, LSU-rRNA)"/>
    <property type="evidence" value="ECO:0000315"/>
    <property type="project" value="SGD"/>
</dbReference>
<dbReference type="InterPro" id="IPR053030">
    <property type="entry name" value="Ribosomal_biogenesis_FAF1-like"/>
</dbReference>
<dbReference type="PANTHER" id="PTHR28096">
    <property type="entry name" value="PROTEIN FAF1"/>
    <property type="match status" value="1"/>
</dbReference>
<dbReference type="PANTHER" id="PTHR28096:SF1">
    <property type="entry name" value="PROTEIN FAF1"/>
    <property type="match status" value="1"/>
</dbReference>
<feature type="chain" id="PRO_0000087172" description="Protein FAF1">
    <location>
        <begin position="1"/>
        <end position="346"/>
    </location>
</feature>
<feature type="region of interest" description="Disordered" evidence="1">
    <location>
        <begin position="22"/>
        <end position="120"/>
    </location>
</feature>
<feature type="region of interest" description="Disordered" evidence="1">
    <location>
        <begin position="323"/>
        <end position="346"/>
    </location>
</feature>
<feature type="compositionally biased region" description="Basic and acidic residues" evidence="1">
    <location>
        <begin position="31"/>
        <end position="65"/>
    </location>
</feature>
<feature type="compositionally biased region" description="Acidic residues" evidence="1">
    <location>
        <begin position="72"/>
        <end position="85"/>
    </location>
</feature>
<feature type="helix" evidence="3">
    <location>
        <begin position="146"/>
        <end position="162"/>
    </location>
</feature>
<comment type="function">
    <text evidence="2">Required for pre-rRNA processing and 40S ribosomal subunit assembly. Seems to act in the processing of 35S rRNA at the A(0), A(1), and A(2) cleavage sites.</text>
</comment>
<comment type="subunit">
    <text evidence="2">Interacts with KRR1.</text>
</comment>
<comment type="subcellular location">
    <subcellularLocation>
        <location evidence="2">Nucleus</location>
        <location evidence="2">Nucleolus</location>
    </subcellularLocation>
</comment>
<keyword id="KW-0002">3D-structure</keyword>
<keyword id="KW-0539">Nucleus</keyword>
<keyword id="KW-1185">Reference proteome</keyword>
<keyword id="KW-0690">Ribosome biogenesis</keyword>